<comment type="function">
    <text evidence="1">Probably binds the 23S rRNA.</text>
</comment>
<comment type="subunit">
    <text>Part of the 50S ribosomal subunit.</text>
</comment>
<comment type="subcellular location">
    <subcellularLocation>
        <location>Plastid</location>
        <location>Chloroplast</location>
    </subcellularLocation>
</comment>
<comment type="similarity">
    <text evidence="3">Belongs to the universal ribosomal protein uL4 family.</text>
</comment>
<feature type="chain" id="PRO_0000242466" description="Large ribosomal subunit protein uL4c">
    <location>
        <begin position="1"/>
        <end position="214"/>
    </location>
</feature>
<feature type="region of interest" description="Disordered" evidence="2">
    <location>
        <begin position="42"/>
        <end position="81"/>
    </location>
</feature>
<feature type="compositionally biased region" description="Basic residues" evidence="2">
    <location>
        <begin position="64"/>
        <end position="75"/>
    </location>
</feature>
<evidence type="ECO:0000250" key="1"/>
<evidence type="ECO:0000256" key="2">
    <source>
        <dbReference type="SAM" id="MobiDB-lite"/>
    </source>
</evidence>
<evidence type="ECO:0000305" key="3"/>
<reference key="1">
    <citation type="submission" date="2003-11" db="EMBL/GenBank/DDBJ databases">
        <title>Whole genome sequence of Porphyra yezoensis chloroplast.</title>
        <authorList>
            <person name="Kunimoto M."/>
            <person name="Morishima K."/>
            <person name="Yoshikawa M."/>
            <person name="Fukuda S."/>
            <person name="Kobayashi T."/>
            <person name="Kobayashi M."/>
            <person name="Okazaki T."/>
            <person name="Ohara I."/>
            <person name="Nakayama I."/>
        </authorList>
    </citation>
    <scope>NUCLEOTIDE SEQUENCE [LARGE SCALE GENOMIC DNA]</scope>
    <source>
        <strain>U-51</strain>
    </source>
</reference>
<name>RK4_PYRYE</name>
<sequence>MTVNTQLNYQVYNWEGQVSGNADLNLKVSQDSGMYLVHRALVKQSNEKRQGSANTKTRSEVRGGGRKPWRQKGTGRARAGSIRSPLWRGGGVIFGPKPRSFTKKMNKKERQLALRTALNNKSVNTLIVENFNSYFHQPKTKLFMEAIHRWNLDLNKKVLVIVDKKDPNVYLSIRNLHNVELISADTLNIMALLAAHKIIITVDALSKIQEVYNG</sequence>
<organism>
    <name type="scientific">Pyropia yezoensis</name>
    <name type="common">Susabi-nori</name>
    <name type="synonym">Porphyra yezoensis</name>
    <dbReference type="NCBI Taxonomy" id="2788"/>
    <lineage>
        <taxon>Eukaryota</taxon>
        <taxon>Rhodophyta</taxon>
        <taxon>Bangiophyceae</taxon>
        <taxon>Bangiales</taxon>
        <taxon>Bangiaceae</taxon>
        <taxon>Pyropia</taxon>
    </lineage>
</organism>
<gene>
    <name type="primary">rpl4</name>
</gene>
<proteinExistence type="inferred from homology"/>
<keyword id="KW-0150">Chloroplast</keyword>
<keyword id="KW-0934">Plastid</keyword>
<keyword id="KW-0687">Ribonucleoprotein</keyword>
<keyword id="KW-0689">Ribosomal protein</keyword>
<keyword id="KW-0694">RNA-binding</keyword>
<keyword id="KW-0699">rRNA-binding</keyword>
<dbReference type="EMBL" id="AP006715">
    <property type="protein sequence ID" value="BAE92436.1"/>
    <property type="molecule type" value="Genomic_DNA"/>
</dbReference>
<dbReference type="RefSeq" id="YP_536993.1">
    <property type="nucleotide sequence ID" value="NC_007932.1"/>
</dbReference>
<dbReference type="SMR" id="Q1XDH5"/>
<dbReference type="GeneID" id="3978759"/>
<dbReference type="GO" id="GO:0009507">
    <property type="term" value="C:chloroplast"/>
    <property type="evidence" value="ECO:0007669"/>
    <property type="project" value="UniProtKB-SubCell"/>
</dbReference>
<dbReference type="GO" id="GO:1990904">
    <property type="term" value="C:ribonucleoprotein complex"/>
    <property type="evidence" value="ECO:0007669"/>
    <property type="project" value="UniProtKB-KW"/>
</dbReference>
<dbReference type="GO" id="GO:0005840">
    <property type="term" value="C:ribosome"/>
    <property type="evidence" value="ECO:0007669"/>
    <property type="project" value="UniProtKB-KW"/>
</dbReference>
<dbReference type="GO" id="GO:0019843">
    <property type="term" value="F:rRNA binding"/>
    <property type="evidence" value="ECO:0007669"/>
    <property type="project" value="UniProtKB-UniRule"/>
</dbReference>
<dbReference type="GO" id="GO:0003735">
    <property type="term" value="F:structural constituent of ribosome"/>
    <property type="evidence" value="ECO:0007669"/>
    <property type="project" value="InterPro"/>
</dbReference>
<dbReference type="GO" id="GO:0006412">
    <property type="term" value="P:translation"/>
    <property type="evidence" value="ECO:0007669"/>
    <property type="project" value="UniProtKB-UniRule"/>
</dbReference>
<dbReference type="Gene3D" id="3.40.1370.10">
    <property type="match status" value="1"/>
</dbReference>
<dbReference type="HAMAP" id="MF_01328_B">
    <property type="entry name" value="Ribosomal_uL4_B"/>
    <property type="match status" value="1"/>
</dbReference>
<dbReference type="InterPro" id="IPR002136">
    <property type="entry name" value="Ribosomal_uL4"/>
</dbReference>
<dbReference type="InterPro" id="IPR013005">
    <property type="entry name" value="Ribosomal_uL4-like"/>
</dbReference>
<dbReference type="InterPro" id="IPR023574">
    <property type="entry name" value="Ribosomal_uL4_dom_sf"/>
</dbReference>
<dbReference type="NCBIfam" id="TIGR03953">
    <property type="entry name" value="rplD_bact"/>
    <property type="match status" value="1"/>
</dbReference>
<dbReference type="PANTHER" id="PTHR10746">
    <property type="entry name" value="50S RIBOSOMAL PROTEIN L4"/>
    <property type="match status" value="1"/>
</dbReference>
<dbReference type="PANTHER" id="PTHR10746:SF17">
    <property type="entry name" value="LARGE RIBOSOMAL SUBUNIT PROTEIN UL4C"/>
    <property type="match status" value="1"/>
</dbReference>
<dbReference type="Pfam" id="PF00573">
    <property type="entry name" value="Ribosomal_L4"/>
    <property type="match status" value="1"/>
</dbReference>
<dbReference type="SUPFAM" id="SSF52166">
    <property type="entry name" value="Ribosomal protein L4"/>
    <property type="match status" value="1"/>
</dbReference>
<geneLocation type="chloroplast"/>
<accession>Q1XDH5</accession>
<protein>
    <recommendedName>
        <fullName evidence="3">Large ribosomal subunit protein uL4c</fullName>
    </recommendedName>
    <alternativeName>
        <fullName>50S ribosomal protein L4, chloroplastic</fullName>
    </alternativeName>
</protein>